<reference key="1">
    <citation type="journal article" date="2004" name="PLoS Biol.">
        <title>Genomic insights into methanotrophy: the complete genome sequence of Methylococcus capsulatus (Bath).</title>
        <authorList>
            <person name="Ward N.L."/>
            <person name="Larsen O."/>
            <person name="Sakwa J."/>
            <person name="Bruseth L."/>
            <person name="Khouri H.M."/>
            <person name="Durkin A.S."/>
            <person name="Dimitrov G."/>
            <person name="Jiang L."/>
            <person name="Scanlan D."/>
            <person name="Kang K.H."/>
            <person name="Lewis M.R."/>
            <person name="Nelson K.E."/>
            <person name="Methe B.A."/>
            <person name="Wu M."/>
            <person name="Heidelberg J.F."/>
            <person name="Paulsen I.T."/>
            <person name="Fouts D.E."/>
            <person name="Ravel J."/>
            <person name="Tettelin H."/>
            <person name="Ren Q."/>
            <person name="Read T.D."/>
            <person name="DeBoy R.T."/>
            <person name="Seshadri R."/>
            <person name="Salzberg S.L."/>
            <person name="Jensen H.B."/>
            <person name="Birkeland N.K."/>
            <person name="Nelson W.C."/>
            <person name="Dodson R.J."/>
            <person name="Grindhaug S.H."/>
            <person name="Holt I.E."/>
            <person name="Eidhammer I."/>
            <person name="Jonasen I."/>
            <person name="Vanaken S."/>
            <person name="Utterback T.R."/>
            <person name="Feldblyum T.V."/>
            <person name="Fraser C.M."/>
            <person name="Lillehaug J.R."/>
            <person name="Eisen J.A."/>
        </authorList>
    </citation>
    <scope>NUCLEOTIDE SEQUENCE [LARGE SCALE GENOMIC DNA]</scope>
    <source>
        <strain>ATCC 33009 / NCIMB 11132 / Bath</strain>
    </source>
</reference>
<evidence type="ECO:0000255" key="1">
    <source>
        <dbReference type="HAMAP-Rule" id="MF_00456"/>
    </source>
</evidence>
<keyword id="KW-0028">Amino-acid biosynthesis</keyword>
<keyword id="KW-0067">ATP-binding</keyword>
<keyword id="KW-0963">Cytoplasm</keyword>
<keyword id="KW-0418">Kinase</keyword>
<keyword id="KW-0547">Nucleotide-binding</keyword>
<keyword id="KW-0641">Proline biosynthesis</keyword>
<keyword id="KW-1185">Reference proteome</keyword>
<keyword id="KW-0808">Transferase</keyword>
<protein>
    <recommendedName>
        <fullName evidence="1">Glutamate 5-kinase</fullName>
        <ecNumber evidence="1">2.7.2.11</ecNumber>
    </recommendedName>
    <alternativeName>
        <fullName evidence="1">Gamma-glutamyl kinase</fullName>
        <shortName evidence="1">GK</shortName>
    </alternativeName>
</protein>
<comment type="function">
    <text evidence="1">Catalyzes the transfer of a phosphate group to glutamate to form L-glutamate 5-phosphate.</text>
</comment>
<comment type="catalytic activity">
    <reaction evidence="1">
        <text>L-glutamate + ATP = L-glutamyl 5-phosphate + ADP</text>
        <dbReference type="Rhea" id="RHEA:14877"/>
        <dbReference type="ChEBI" id="CHEBI:29985"/>
        <dbReference type="ChEBI" id="CHEBI:30616"/>
        <dbReference type="ChEBI" id="CHEBI:58274"/>
        <dbReference type="ChEBI" id="CHEBI:456216"/>
        <dbReference type="EC" id="2.7.2.11"/>
    </reaction>
</comment>
<comment type="pathway">
    <text evidence="1">Amino-acid biosynthesis; L-proline biosynthesis; L-glutamate 5-semialdehyde from L-glutamate: step 1/2.</text>
</comment>
<comment type="subcellular location">
    <subcellularLocation>
        <location evidence="1">Cytoplasm</location>
    </subcellularLocation>
</comment>
<comment type="similarity">
    <text evidence="1">Belongs to the glutamate 5-kinase family.</text>
</comment>
<accession>Q605N1</accession>
<sequence>MQSRNELPGSRRVIVKIGSALLTAGGKGLDQPAIGQWVQQIAELRQQGIQVVLVSSGSVAEGMSRLGWKTRPHRLNELQAAASVGQMGLVQTYESLFKRHGLQTAQILLTHDDLSNRERYLNSRSTILTLLELGVIPVINENDTVTTEEIRFGDNDTLGALVANAVEADLLIILTDQAGLFERNPSLDPSAPLVPQAGINDPRLNDMVGDSLSGLGRGGMITKLRAARLAARSGTATVIASGRESGVLPRILDGEELGTLLIPDVSPLIARKRWMAGQLKLKGCFVVDEGAARVLRDAGKSLLPIGVIAVEGEFRRGDLVACTDSAGQEIARGLTNYSAEEARLIMRQPSTRIEEILGYVDEPELIHRDNLVLS</sequence>
<organism>
    <name type="scientific">Methylococcus capsulatus (strain ATCC 33009 / NCIMB 11132 / Bath)</name>
    <dbReference type="NCBI Taxonomy" id="243233"/>
    <lineage>
        <taxon>Bacteria</taxon>
        <taxon>Pseudomonadati</taxon>
        <taxon>Pseudomonadota</taxon>
        <taxon>Gammaproteobacteria</taxon>
        <taxon>Methylococcales</taxon>
        <taxon>Methylococcaceae</taxon>
        <taxon>Methylococcus</taxon>
    </lineage>
</organism>
<proteinExistence type="inferred from homology"/>
<feature type="chain" id="PRO_0000109692" description="Glutamate 5-kinase">
    <location>
        <begin position="1"/>
        <end position="374"/>
    </location>
</feature>
<feature type="domain" description="PUA" evidence="1">
    <location>
        <begin position="282"/>
        <end position="360"/>
    </location>
</feature>
<feature type="binding site" evidence="1">
    <location>
        <position position="16"/>
    </location>
    <ligand>
        <name>ATP</name>
        <dbReference type="ChEBI" id="CHEBI:30616"/>
    </ligand>
</feature>
<feature type="binding site" evidence="1">
    <location>
        <position position="56"/>
    </location>
    <ligand>
        <name>substrate</name>
    </ligand>
</feature>
<feature type="binding site" evidence="1">
    <location>
        <position position="143"/>
    </location>
    <ligand>
        <name>substrate</name>
    </ligand>
</feature>
<feature type="binding site" evidence="1">
    <location>
        <position position="155"/>
    </location>
    <ligand>
        <name>substrate</name>
    </ligand>
</feature>
<feature type="binding site" evidence="1">
    <location>
        <begin position="175"/>
        <end position="176"/>
    </location>
    <ligand>
        <name>ATP</name>
        <dbReference type="ChEBI" id="CHEBI:30616"/>
    </ligand>
</feature>
<gene>
    <name evidence="1" type="primary">proB</name>
    <name type="ordered locus">MCA2249</name>
</gene>
<dbReference type="EC" id="2.7.2.11" evidence="1"/>
<dbReference type="EMBL" id="AE017282">
    <property type="protein sequence ID" value="AAU91764.1"/>
    <property type="molecule type" value="Genomic_DNA"/>
</dbReference>
<dbReference type="RefSeq" id="WP_010961479.1">
    <property type="nucleotide sequence ID" value="NC_002977.6"/>
</dbReference>
<dbReference type="SMR" id="Q605N1"/>
<dbReference type="STRING" id="243233.MCA2249"/>
<dbReference type="GeneID" id="88224455"/>
<dbReference type="KEGG" id="mca:MCA2249"/>
<dbReference type="eggNOG" id="COG0263">
    <property type="taxonomic scope" value="Bacteria"/>
</dbReference>
<dbReference type="HOGENOM" id="CLU_025400_2_0_6"/>
<dbReference type="UniPathway" id="UPA00098">
    <property type="reaction ID" value="UER00359"/>
</dbReference>
<dbReference type="Proteomes" id="UP000006821">
    <property type="component" value="Chromosome"/>
</dbReference>
<dbReference type="GO" id="GO:0005829">
    <property type="term" value="C:cytosol"/>
    <property type="evidence" value="ECO:0007669"/>
    <property type="project" value="TreeGrafter"/>
</dbReference>
<dbReference type="GO" id="GO:0005524">
    <property type="term" value="F:ATP binding"/>
    <property type="evidence" value="ECO:0007669"/>
    <property type="project" value="UniProtKB-KW"/>
</dbReference>
<dbReference type="GO" id="GO:0004349">
    <property type="term" value="F:glutamate 5-kinase activity"/>
    <property type="evidence" value="ECO:0007669"/>
    <property type="project" value="UniProtKB-UniRule"/>
</dbReference>
<dbReference type="GO" id="GO:0003723">
    <property type="term" value="F:RNA binding"/>
    <property type="evidence" value="ECO:0007669"/>
    <property type="project" value="InterPro"/>
</dbReference>
<dbReference type="GO" id="GO:0055129">
    <property type="term" value="P:L-proline biosynthetic process"/>
    <property type="evidence" value="ECO:0007669"/>
    <property type="project" value="UniProtKB-UniRule"/>
</dbReference>
<dbReference type="CDD" id="cd04242">
    <property type="entry name" value="AAK_G5K_ProB"/>
    <property type="match status" value="1"/>
</dbReference>
<dbReference type="CDD" id="cd21157">
    <property type="entry name" value="PUA_G5K"/>
    <property type="match status" value="1"/>
</dbReference>
<dbReference type="FunFam" id="2.30.130.10:FF:000007">
    <property type="entry name" value="Glutamate 5-kinase"/>
    <property type="match status" value="1"/>
</dbReference>
<dbReference type="FunFam" id="3.40.1160.10:FF:000018">
    <property type="entry name" value="Glutamate 5-kinase"/>
    <property type="match status" value="1"/>
</dbReference>
<dbReference type="Gene3D" id="3.40.1160.10">
    <property type="entry name" value="Acetylglutamate kinase-like"/>
    <property type="match status" value="1"/>
</dbReference>
<dbReference type="Gene3D" id="2.30.130.10">
    <property type="entry name" value="PUA domain"/>
    <property type="match status" value="1"/>
</dbReference>
<dbReference type="HAMAP" id="MF_00456">
    <property type="entry name" value="ProB"/>
    <property type="match status" value="1"/>
</dbReference>
<dbReference type="InterPro" id="IPR036393">
    <property type="entry name" value="AceGlu_kinase-like_sf"/>
</dbReference>
<dbReference type="InterPro" id="IPR001048">
    <property type="entry name" value="Asp/Glu/Uridylate_kinase"/>
</dbReference>
<dbReference type="InterPro" id="IPR041739">
    <property type="entry name" value="G5K_ProB"/>
</dbReference>
<dbReference type="InterPro" id="IPR001057">
    <property type="entry name" value="Glu/AcGlu_kinase"/>
</dbReference>
<dbReference type="InterPro" id="IPR011529">
    <property type="entry name" value="Glu_5kinase"/>
</dbReference>
<dbReference type="InterPro" id="IPR005715">
    <property type="entry name" value="Glu_5kinase/COase_Synthase"/>
</dbReference>
<dbReference type="InterPro" id="IPR019797">
    <property type="entry name" value="Glutamate_5-kinase_CS"/>
</dbReference>
<dbReference type="InterPro" id="IPR002478">
    <property type="entry name" value="PUA"/>
</dbReference>
<dbReference type="InterPro" id="IPR015947">
    <property type="entry name" value="PUA-like_sf"/>
</dbReference>
<dbReference type="InterPro" id="IPR036974">
    <property type="entry name" value="PUA_sf"/>
</dbReference>
<dbReference type="NCBIfam" id="TIGR01027">
    <property type="entry name" value="proB"/>
    <property type="match status" value="1"/>
</dbReference>
<dbReference type="PANTHER" id="PTHR43654">
    <property type="entry name" value="GLUTAMATE 5-KINASE"/>
    <property type="match status" value="1"/>
</dbReference>
<dbReference type="PANTHER" id="PTHR43654:SF1">
    <property type="entry name" value="ISOPENTENYL PHOSPHATE KINASE"/>
    <property type="match status" value="1"/>
</dbReference>
<dbReference type="Pfam" id="PF00696">
    <property type="entry name" value="AA_kinase"/>
    <property type="match status" value="1"/>
</dbReference>
<dbReference type="Pfam" id="PF01472">
    <property type="entry name" value="PUA"/>
    <property type="match status" value="1"/>
</dbReference>
<dbReference type="PIRSF" id="PIRSF000729">
    <property type="entry name" value="GK"/>
    <property type="match status" value="1"/>
</dbReference>
<dbReference type="PRINTS" id="PR00474">
    <property type="entry name" value="GLU5KINASE"/>
</dbReference>
<dbReference type="SMART" id="SM00359">
    <property type="entry name" value="PUA"/>
    <property type="match status" value="1"/>
</dbReference>
<dbReference type="SUPFAM" id="SSF53633">
    <property type="entry name" value="Carbamate kinase-like"/>
    <property type="match status" value="1"/>
</dbReference>
<dbReference type="SUPFAM" id="SSF88697">
    <property type="entry name" value="PUA domain-like"/>
    <property type="match status" value="1"/>
</dbReference>
<dbReference type="PROSITE" id="PS00902">
    <property type="entry name" value="GLUTAMATE_5_KINASE"/>
    <property type="match status" value="1"/>
</dbReference>
<dbReference type="PROSITE" id="PS50890">
    <property type="entry name" value="PUA"/>
    <property type="match status" value="1"/>
</dbReference>
<name>PROB_METCA</name>